<evidence type="ECO:0000255" key="1">
    <source>
        <dbReference type="HAMAP-Rule" id="MF_01395"/>
    </source>
</evidence>
<evidence type="ECO:0000255" key="2">
    <source>
        <dbReference type="PROSITE-ProRule" id="PRU01136"/>
    </source>
</evidence>
<accession>Q2G8S9</accession>
<protein>
    <recommendedName>
        <fullName evidence="1">Acetyl-coenzyme A carboxylase carboxyl transferase subunit beta</fullName>
        <shortName evidence="1">ACCase subunit beta</shortName>
        <shortName evidence="1">Acetyl-CoA carboxylase carboxyltransferase subunit beta</shortName>
        <ecNumber evidence="1">2.1.3.15</ecNumber>
    </recommendedName>
</protein>
<comment type="function">
    <text evidence="1">Component of the acetyl coenzyme A carboxylase (ACC) complex. Biotin carboxylase (BC) catalyzes the carboxylation of biotin on its carrier protein (BCCP) and then the CO(2) group is transferred by the transcarboxylase to acetyl-CoA to form malonyl-CoA.</text>
</comment>
<comment type="catalytic activity">
    <reaction evidence="1">
        <text>N(6)-carboxybiotinyl-L-lysyl-[protein] + acetyl-CoA = N(6)-biotinyl-L-lysyl-[protein] + malonyl-CoA</text>
        <dbReference type="Rhea" id="RHEA:54728"/>
        <dbReference type="Rhea" id="RHEA-COMP:10505"/>
        <dbReference type="Rhea" id="RHEA-COMP:10506"/>
        <dbReference type="ChEBI" id="CHEBI:57288"/>
        <dbReference type="ChEBI" id="CHEBI:57384"/>
        <dbReference type="ChEBI" id="CHEBI:83144"/>
        <dbReference type="ChEBI" id="CHEBI:83145"/>
        <dbReference type="EC" id="2.1.3.15"/>
    </reaction>
</comment>
<comment type="cofactor">
    <cofactor evidence="1">
        <name>Zn(2+)</name>
        <dbReference type="ChEBI" id="CHEBI:29105"/>
    </cofactor>
    <text evidence="1">Binds 1 zinc ion per subunit.</text>
</comment>
<comment type="pathway">
    <text evidence="1">Lipid metabolism; malonyl-CoA biosynthesis; malonyl-CoA from acetyl-CoA: step 1/1.</text>
</comment>
<comment type="subunit">
    <text evidence="1">Acetyl-CoA carboxylase is a heterohexamer composed of biotin carboxyl carrier protein (AccB), biotin carboxylase (AccC) and two subunits each of ACCase subunit alpha (AccA) and ACCase subunit beta (AccD).</text>
</comment>
<comment type="subcellular location">
    <subcellularLocation>
        <location evidence="1">Cytoplasm</location>
    </subcellularLocation>
</comment>
<comment type="similarity">
    <text evidence="1">Belongs to the AccD/PCCB family.</text>
</comment>
<gene>
    <name evidence="1" type="primary">accD</name>
    <name type="ordered locus">Saro_1300</name>
</gene>
<reference key="1">
    <citation type="submission" date="2006-01" db="EMBL/GenBank/DDBJ databases">
        <title>Complete sequence of Novosphingobium aromaticivorans DSM 12444.</title>
        <authorList>
            <consortium name="US DOE Joint Genome Institute"/>
            <person name="Copeland A."/>
            <person name="Lucas S."/>
            <person name="Lapidus A."/>
            <person name="Barry K."/>
            <person name="Detter J.C."/>
            <person name="Glavina T."/>
            <person name="Hammon N."/>
            <person name="Israni S."/>
            <person name="Pitluck S."/>
            <person name="Chain P."/>
            <person name="Malfatti S."/>
            <person name="Shin M."/>
            <person name="Vergez L."/>
            <person name="Schmutz J."/>
            <person name="Larimer F."/>
            <person name="Land M."/>
            <person name="Kyrpides N."/>
            <person name="Ivanova N."/>
            <person name="Fredrickson J."/>
            <person name="Balkwill D."/>
            <person name="Romine M.F."/>
            <person name="Richardson P."/>
        </authorList>
    </citation>
    <scope>NUCLEOTIDE SEQUENCE [LARGE SCALE GENOMIC DNA]</scope>
    <source>
        <strain>ATCC 700278 / DSM 12444 / CCUG 56034 / CIP 105152 / NBRC 16084 / F199</strain>
    </source>
</reference>
<name>ACCD_NOVAD</name>
<organism>
    <name type="scientific">Novosphingobium aromaticivorans (strain ATCC 700278 / DSM 12444 / CCUG 56034 / CIP 105152 / NBRC 16084 / F199)</name>
    <dbReference type="NCBI Taxonomy" id="279238"/>
    <lineage>
        <taxon>Bacteria</taxon>
        <taxon>Pseudomonadati</taxon>
        <taxon>Pseudomonadota</taxon>
        <taxon>Alphaproteobacteria</taxon>
        <taxon>Sphingomonadales</taxon>
        <taxon>Sphingomonadaceae</taxon>
        <taxon>Novosphingobium</taxon>
    </lineage>
</organism>
<sequence>MSWLNKVRNALPFTPKRDTPDNLWIKCPSCSEMLFTKEYEDNLSVCPHCDHHGRIGANARLEQLLDAGYELLPAPKVKEDPLKFRDTKKYVDRIKAARAANPHPDALTNAFGRIEGQKAVVGVQEFAFMGGSMGMAVGNAFVAGTERAIKEKCPYVAVTAAGGARMQEGILSLMQMPRSTVAISRLHAAGLPYIVVLTDPTTGGVTASYAMLGDVQIAEPGALIGFAGQRVIQDTIREKLPEGFQRAEYLHAHGMIDMVTHRRDLKTTLAQVIDFLMAGKAAA</sequence>
<dbReference type="EC" id="2.1.3.15" evidence="1"/>
<dbReference type="EMBL" id="CP000248">
    <property type="protein sequence ID" value="ABD25744.1"/>
    <property type="molecule type" value="Genomic_DNA"/>
</dbReference>
<dbReference type="RefSeq" id="WP_011444958.1">
    <property type="nucleotide sequence ID" value="NC_007794.1"/>
</dbReference>
<dbReference type="SMR" id="Q2G8S9"/>
<dbReference type="STRING" id="279238.Saro_1300"/>
<dbReference type="KEGG" id="nar:Saro_1300"/>
<dbReference type="eggNOG" id="COG0777">
    <property type="taxonomic scope" value="Bacteria"/>
</dbReference>
<dbReference type="HOGENOM" id="CLU_015486_1_0_5"/>
<dbReference type="UniPathway" id="UPA00655">
    <property type="reaction ID" value="UER00711"/>
</dbReference>
<dbReference type="Proteomes" id="UP000009134">
    <property type="component" value="Chromosome"/>
</dbReference>
<dbReference type="GO" id="GO:0009329">
    <property type="term" value="C:acetate CoA-transferase complex"/>
    <property type="evidence" value="ECO:0007669"/>
    <property type="project" value="TreeGrafter"/>
</dbReference>
<dbReference type="GO" id="GO:0003989">
    <property type="term" value="F:acetyl-CoA carboxylase activity"/>
    <property type="evidence" value="ECO:0007669"/>
    <property type="project" value="InterPro"/>
</dbReference>
<dbReference type="GO" id="GO:0005524">
    <property type="term" value="F:ATP binding"/>
    <property type="evidence" value="ECO:0007669"/>
    <property type="project" value="UniProtKB-KW"/>
</dbReference>
<dbReference type="GO" id="GO:0016743">
    <property type="term" value="F:carboxyl- or carbamoyltransferase activity"/>
    <property type="evidence" value="ECO:0007669"/>
    <property type="project" value="UniProtKB-UniRule"/>
</dbReference>
<dbReference type="GO" id="GO:0008270">
    <property type="term" value="F:zinc ion binding"/>
    <property type="evidence" value="ECO:0007669"/>
    <property type="project" value="UniProtKB-UniRule"/>
</dbReference>
<dbReference type="GO" id="GO:0006633">
    <property type="term" value="P:fatty acid biosynthetic process"/>
    <property type="evidence" value="ECO:0007669"/>
    <property type="project" value="UniProtKB-KW"/>
</dbReference>
<dbReference type="GO" id="GO:2001295">
    <property type="term" value="P:malonyl-CoA biosynthetic process"/>
    <property type="evidence" value="ECO:0007669"/>
    <property type="project" value="UniProtKB-UniRule"/>
</dbReference>
<dbReference type="Gene3D" id="3.90.226.10">
    <property type="entry name" value="2-enoyl-CoA Hydratase, Chain A, domain 1"/>
    <property type="match status" value="1"/>
</dbReference>
<dbReference type="HAMAP" id="MF_01395">
    <property type="entry name" value="AcetylCoA_CT_beta"/>
    <property type="match status" value="1"/>
</dbReference>
<dbReference type="InterPro" id="IPR034733">
    <property type="entry name" value="AcCoA_carboxyl_beta"/>
</dbReference>
<dbReference type="InterPro" id="IPR000438">
    <property type="entry name" value="Acetyl_CoA_COase_Trfase_b_su"/>
</dbReference>
<dbReference type="InterPro" id="IPR029045">
    <property type="entry name" value="ClpP/crotonase-like_dom_sf"/>
</dbReference>
<dbReference type="InterPro" id="IPR011762">
    <property type="entry name" value="COA_CT_N"/>
</dbReference>
<dbReference type="InterPro" id="IPR041010">
    <property type="entry name" value="Znf-ACC"/>
</dbReference>
<dbReference type="NCBIfam" id="TIGR00515">
    <property type="entry name" value="accD"/>
    <property type="match status" value="1"/>
</dbReference>
<dbReference type="PANTHER" id="PTHR42995">
    <property type="entry name" value="ACETYL-COENZYME A CARBOXYLASE CARBOXYL TRANSFERASE SUBUNIT BETA, CHLOROPLASTIC"/>
    <property type="match status" value="1"/>
</dbReference>
<dbReference type="PANTHER" id="PTHR42995:SF5">
    <property type="entry name" value="ACETYL-COENZYME A CARBOXYLASE CARBOXYL TRANSFERASE SUBUNIT BETA, CHLOROPLASTIC"/>
    <property type="match status" value="1"/>
</dbReference>
<dbReference type="Pfam" id="PF01039">
    <property type="entry name" value="Carboxyl_trans"/>
    <property type="match status" value="1"/>
</dbReference>
<dbReference type="Pfam" id="PF17848">
    <property type="entry name" value="Zn_ribbon_ACC"/>
    <property type="match status" value="1"/>
</dbReference>
<dbReference type="PRINTS" id="PR01070">
    <property type="entry name" value="ACCCTRFRASEB"/>
</dbReference>
<dbReference type="SUPFAM" id="SSF52096">
    <property type="entry name" value="ClpP/crotonase"/>
    <property type="match status" value="1"/>
</dbReference>
<dbReference type="PROSITE" id="PS50980">
    <property type="entry name" value="COA_CT_NTER"/>
    <property type="match status" value="1"/>
</dbReference>
<proteinExistence type="inferred from homology"/>
<keyword id="KW-0067">ATP-binding</keyword>
<keyword id="KW-0963">Cytoplasm</keyword>
<keyword id="KW-0275">Fatty acid biosynthesis</keyword>
<keyword id="KW-0276">Fatty acid metabolism</keyword>
<keyword id="KW-0444">Lipid biosynthesis</keyword>
<keyword id="KW-0443">Lipid metabolism</keyword>
<keyword id="KW-0479">Metal-binding</keyword>
<keyword id="KW-0547">Nucleotide-binding</keyword>
<keyword id="KW-1185">Reference proteome</keyword>
<keyword id="KW-0808">Transferase</keyword>
<keyword id="KW-0862">Zinc</keyword>
<keyword id="KW-0863">Zinc-finger</keyword>
<feature type="chain" id="PRO_0000389804" description="Acetyl-coenzyme A carboxylase carboxyl transferase subunit beta">
    <location>
        <begin position="1"/>
        <end position="283"/>
    </location>
</feature>
<feature type="domain" description="CoA carboxyltransferase N-terminal" evidence="2">
    <location>
        <begin position="23"/>
        <end position="283"/>
    </location>
</feature>
<feature type="zinc finger region" description="C4-type" evidence="1">
    <location>
        <begin position="27"/>
        <end position="49"/>
    </location>
</feature>
<feature type="binding site" evidence="1">
    <location>
        <position position="27"/>
    </location>
    <ligand>
        <name>Zn(2+)</name>
        <dbReference type="ChEBI" id="CHEBI:29105"/>
    </ligand>
</feature>
<feature type="binding site" evidence="1">
    <location>
        <position position="30"/>
    </location>
    <ligand>
        <name>Zn(2+)</name>
        <dbReference type="ChEBI" id="CHEBI:29105"/>
    </ligand>
</feature>
<feature type="binding site" evidence="1">
    <location>
        <position position="46"/>
    </location>
    <ligand>
        <name>Zn(2+)</name>
        <dbReference type="ChEBI" id="CHEBI:29105"/>
    </ligand>
</feature>
<feature type="binding site" evidence="1">
    <location>
        <position position="49"/>
    </location>
    <ligand>
        <name>Zn(2+)</name>
        <dbReference type="ChEBI" id="CHEBI:29105"/>
    </ligand>
</feature>